<sequence length="202" mass="23201">MTERSNNRQSQIYNFIKSQIKQKGYPPSVREICTAVGLKSTSTVHSYLEKLERRGFIKRDATKSRTIEVIEKSQKKEMIEVPIIGTITAGMPIIAVENIEDYFPLPMDYIKNKREIFMLRVKGESMVDAGILDGDLSLIEKVHSAENGDIVVALIENEATLKRFFKEENHIRLQPENKNMPPIIVDDCKIIGRLIGIYRQYE</sequence>
<dbReference type="EC" id="3.4.21.88" evidence="1"/>
<dbReference type="EMBL" id="CP000673">
    <property type="protein sequence ID" value="EDK33621.1"/>
    <property type="molecule type" value="Genomic_DNA"/>
</dbReference>
<dbReference type="RefSeq" id="WP_012101974.1">
    <property type="nucleotide sequence ID" value="NC_009706.1"/>
</dbReference>
<dbReference type="SMR" id="A5N8J0"/>
<dbReference type="STRING" id="431943.CKL_1579"/>
<dbReference type="MEROPS" id="S24.001"/>
<dbReference type="KEGG" id="ckl:CKL_1579"/>
<dbReference type="eggNOG" id="COG1974">
    <property type="taxonomic scope" value="Bacteria"/>
</dbReference>
<dbReference type="HOGENOM" id="CLU_066192_45_1_9"/>
<dbReference type="Proteomes" id="UP000002411">
    <property type="component" value="Chromosome"/>
</dbReference>
<dbReference type="GO" id="GO:0003677">
    <property type="term" value="F:DNA binding"/>
    <property type="evidence" value="ECO:0007669"/>
    <property type="project" value="UniProtKB-UniRule"/>
</dbReference>
<dbReference type="GO" id="GO:0004252">
    <property type="term" value="F:serine-type endopeptidase activity"/>
    <property type="evidence" value="ECO:0007669"/>
    <property type="project" value="UniProtKB-UniRule"/>
</dbReference>
<dbReference type="GO" id="GO:0006281">
    <property type="term" value="P:DNA repair"/>
    <property type="evidence" value="ECO:0007669"/>
    <property type="project" value="UniProtKB-UniRule"/>
</dbReference>
<dbReference type="GO" id="GO:0006260">
    <property type="term" value="P:DNA replication"/>
    <property type="evidence" value="ECO:0007669"/>
    <property type="project" value="UniProtKB-UniRule"/>
</dbReference>
<dbReference type="GO" id="GO:0045892">
    <property type="term" value="P:negative regulation of DNA-templated transcription"/>
    <property type="evidence" value="ECO:0007669"/>
    <property type="project" value="UniProtKB-UniRule"/>
</dbReference>
<dbReference type="GO" id="GO:0006508">
    <property type="term" value="P:proteolysis"/>
    <property type="evidence" value="ECO:0007669"/>
    <property type="project" value="InterPro"/>
</dbReference>
<dbReference type="GO" id="GO:0009432">
    <property type="term" value="P:SOS response"/>
    <property type="evidence" value="ECO:0007669"/>
    <property type="project" value="UniProtKB-UniRule"/>
</dbReference>
<dbReference type="CDD" id="cd06529">
    <property type="entry name" value="S24_LexA-like"/>
    <property type="match status" value="1"/>
</dbReference>
<dbReference type="FunFam" id="1.10.10.10:FF:000009">
    <property type="entry name" value="LexA repressor"/>
    <property type="match status" value="1"/>
</dbReference>
<dbReference type="FunFam" id="2.10.109.10:FF:000001">
    <property type="entry name" value="LexA repressor"/>
    <property type="match status" value="1"/>
</dbReference>
<dbReference type="Gene3D" id="2.10.109.10">
    <property type="entry name" value="Umud Fragment, subunit A"/>
    <property type="match status" value="1"/>
</dbReference>
<dbReference type="Gene3D" id="1.10.10.10">
    <property type="entry name" value="Winged helix-like DNA-binding domain superfamily/Winged helix DNA-binding domain"/>
    <property type="match status" value="1"/>
</dbReference>
<dbReference type="HAMAP" id="MF_00015">
    <property type="entry name" value="LexA"/>
    <property type="match status" value="1"/>
</dbReference>
<dbReference type="InterPro" id="IPR006200">
    <property type="entry name" value="LexA"/>
</dbReference>
<dbReference type="InterPro" id="IPR039418">
    <property type="entry name" value="LexA-like"/>
</dbReference>
<dbReference type="InterPro" id="IPR036286">
    <property type="entry name" value="LexA/Signal_pep-like_sf"/>
</dbReference>
<dbReference type="InterPro" id="IPR006199">
    <property type="entry name" value="LexA_DNA-bd_dom"/>
</dbReference>
<dbReference type="InterPro" id="IPR050077">
    <property type="entry name" value="LexA_repressor"/>
</dbReference>
<dbReference type="InterPro" id="IPR006197">
    <property type="entry name" value="Peptidase_S24_LexA"/>
</dbReference>
<dbReference type="InterPro" id="IPR015927">
    <property type="entry name" value="Peptidase_S24_S26A/B/C"/>
</dbReference>
<dbReference type="InterPro" id="IPR036388">
    <property type="entry name" value="WH-like_DNA-bd_sf"/>
</dbReference>
<dbReference type="InterPro" id="IPR036390">
    <property type="entry name" value="WH_DNA-bd_sf"/>
</dbReference>
<dbReference type="NCBIfam" id="TIGR00498">
    <property type="entry name" value="lexA"/>
    <property type="match status" value="1"/>
</dbReference>
<dbReference type="PANTHER" id="PTHR33516">
    <property type="entry name" value="LEXA REPRESSOR"/>
    <property type="match status" value="1"/>
</dbReference>
<dbReference type="PANTHER" id="PTHR33516:SF2">
    <property type="entry name" value="LEXA REPRESSOR-RELATED"/>
    <property type="match status" value="1"/>
</dbReference>
<dbReference type="Pfam" id="PF01726">
    <property type="entry name" value="LexA_DNA_bind"/>
    <property type="match status" value="1"/>
</dbReference>
<dbReference type="Pfam" id="PF00717">
    <property type="entry name" value="Peptidase_S24"/>
    <property type="match status" value="1"/>
</dbReference>
<dbReference type="PRINTS" id="PR00726">
    <property type="entry name" value="LEXASERPTASE"/>
</dbReference>
<dbReference type="SUPFAM" id="SSF51306">
    <property type="entry name" value="LexA/Signal peptidase"/>
    <property type="match status" value="1"/>
</dbReference>
<dbReference type="SUPFAM" id="SSF46785">
    <property type="entry name" value="Winged helix' DNA-binding domain"/>
    <property type="match status" value="1"/>
</dbReference>
<protein>
    <recommendedName>
        <fullName evidence="1">LexA repressor</fullName>
        <ecNumber evidence="1">3.4.21.88</ecNumber>
    </recommendedName>
</protein>
<organism>
    <name type="scientific">Clostridium kluyveri (strain ATCC 8527 / DSM 555 / NBRC 12016 / NCIMB 10680 / K1)</name>
    <dbReference type="NCBI Taxonomy" id="431943"/>
    <lineage>
        <taxon>Bacteria</taxon>
        <taxon>Bacillati</taxon>
        <taxon>Bacillota</taxon>
        <taxon>Clostridia</taxon>
        <taxon>Eubacteriales</taxon>
        <taxon>Clostridiaceae</taxon>
        <taxon>Clostridium</taxon>
    </lineage>
</organism>
<reference key="1">
    <citation type="journal article" date="2008" name="Proc. Natl. Acad. Sci. U.S.A.">
        <title>The genome of Clostridium kluyveri, a strict anaerobe with unique metabolic features.</title>
        <authorList>
            <person name="Seedorf H."/>
            <person name="Fricke W.F."/>
            <person name="Veith B."/>
            <person name="Brueggemann H."/>
            <person name="Liesegang H."/>
            <person name="Strittmatter A."/>
            <person name="Miethke M."/>
            <person name="Buckel W."/>
            <person name="Hinderberger J."/>
            <person name="Li F."/>
            <person name="Hagemeier C."/>
            <person name="Thauer R.K."/>
            <person name="Gottschalk G."/>
        </authorList>
    </citation>
    <scope>NUCLEOTIDE SEQUENCE [LARGE SCALE GENOMIC DNA]</scope>
    <source>
        <strain>ATCC 8527 / DSM 555 / NBRC 12016 / NCIMB 10680 / K1</strain>
    </source>
</reference>
<proteinExistence type="inferred from homology"/>
<comment type="function">
    <text evidence="1">Represses a number of genes involved in the response to DNA damage (SOS response), including recA and lexA. In the presence of single-stranded DNA, RecA interacts with LexA causing an autocatalytic cleavage which disrupts the DNA-binding part of LexA, leading to derepression of the SOS regulon and eventually DNA repair.</text>
</comment>
<comment type="catalytic activity">
    <reaction evidence="1">
        <text>Hydrolysis of Ala-|-Gly bond in repressor LexA.</text>
        <dbReference type="EC" id="3.4.21.88"/>
    </reaction>
</comment>
<comment type="subunit">
    <text evidence="1">Homodimer.</text>
</comment>
<comment type="similarity">
    <text evidence="1">Belongs to the peptidase S24 family.</text>
</comment>
<feature type="chain" id="PRO_1000074052" description="LexA repressor">
    <location>
        <begin position="1"/>
        <end position="202"/>
    </location>
</feature>
<feature type="DNA-binding region" description="H-T-H motif" evidence="1">
    <location>
        <begin position="29"/>
        <end position="49"/>
    </location>
</feature>
<feature type="active site" description="For autocatalytic cleavage activity" evidence="1">
    <location>
        <position position="125"/>
    </location>
</feature>
<feature type="active site" description="For autocatalytic cleavage activity" evidence="1">
    <location>
        <position position="162"/>
    </location>
</feature>
<feature type="site" description="Cleavage; by autolysis" evidence="1">
    <location>
        <begin position="89"/>
        <end position="90"/>
    </location>
</feature>
<name>LEXA_CLOK5</name>
<accession>A5N8J0</accession>
<keyword id="KW-0068">Autocatalytic cleavage</keyword>
<keyword id="KW-0227">DNA damage</keyword>
<keyword id="KW-0234">DNA repair</keyword>
<keyword id="KW-0235">DNA replication</keyword>
<keyword id="KW-0238">DNA-binding</keyword>
<keyword id="KW-0378">Hydrolase</keyword>
<keyword id="KW-1185">Reference proteome</keyword>
<keyword id="KW-0678">Repressor</keyword>
<keyword id="KW-0742">SOS response</keyword>
<keyword id="KW-0804">Transcription</keyword>
<keyword id="KW-0805">Transcription regulation</keyword>
<gene>
    <name evidence="1" type="primary">lexA</name>
    <name type="ordered locus">CKL_1579</name>
</gene>
<evidence type="ECO:0000255" key="1">
    <source>
        <dbReference type="HAMAP-Rule" id="MF_00015"/>
    </source>
</evidence>